<reference key="1">
    <citation type="journal article" date="2003" name="Lancet">
        <title>Genome sequence of Vibrio parahaemolyticus: a pathogenic mechanism distinct from that of V. cholerae.</title>
        <authorList>
            <person name="Makino K."/>
            <person name="Oshima K."/>
            <person name="Kurokawa K."/>
            <person name="Yokoyama K."/>
            <person name="Uda T."/>
            <person name="Tagomori K."/>
            <person name="Iijima Y."/>
            <person name="Najima M."/>
            <person name="Nakano M."/>
            <person name="Yamashita A."/>
            <person name="Kubota Y."/>
            <person name="Kimura S."/>
            <person name="Yasunaga T."/>
            <person name="Honda T."/>
            <person name="Shinagawa H."/>
            <person name="Hattori M."/>
            <person name="Iida T."/>
        </authorList>
    </citation>
    <scope>NUCLEOTIDE SEQUENCE [LARGE SCALE GENOMIC DNA]</scope>
    <source>
        <strain>RIMD 2210633</strain>
    </source>
</reference>
<name>Y875_VIBPA</name>
<feature type="chain" id="PRO_0000375398" description="YcgL domain-containing protein VP0875">
    <location>
        <begin position="1"/>
        <end position="94"/>
    </location>
</feature>
<feature type="domain" description="YcgL" evidence="1">
    <location>
        <begin position="1"/>
        <end position="84"/>
    </location>
</feature>
<protein>
    <recommendedName>
        <fullName evidence="1">YcgL domain-containing protein VP0875</fullName>
    </recommendedName>
</protein>
<dbReference type="EMBL" id="BA000031">
    <property type="protein sequence ID" value="BAC59138.1"/>
    <property type="molecule type" value="Genomic_DNA"/>
</dbReference>
<dbReference type="RefSeq" id="NP_797254.1">
    <property type="nucleotide sequence ID" value="NC_004603.1"/>
</dbReference>
<dbReference type="RefSeq" id="WP_005460544.1">
    <property type="nucleotide sequence ID" value="NC_004603.1"/>
</dbReference>
<dbReference type="SMR" id="Q87RC2"/>
<dbReference type="GeneID" id="1188372"/>
<dbReference type="KEGG" id="vpa:VP0875"/>
<dbReference type="PATRIC" id="fig|223926.6.peg.828"/>
<dbReference type="eggNOG" id="COG3100">
    <property type="taxonomic scope" value="Bacteria"/>
</dbReference>
<dbReference type="HOGENOM" id="CLU_155118_1_0_6"/>
<dbReference type="Proteomes" id="UP000002493">
    <property type="component" value="Chromosome 1"/>
</dbReference>
<dbReference type="Gene3D" id="3.10.510.20">
    <property type="entry name" value="YcgL domain"/>
    <property type="match status" value="1"/>
</dbReference>
<dbReference type="HAMAP" id="MF_01866">
    <property type="entry name" value="UPF0745"/>
    <property type="match status" value="1"/>
</dbReference>
<dbReference type="InterPro" id="IPR038068">
    <property type="entry name" value="YcgL-like_sf"/>
</dbReference>
<dbReference type="InterPro" id="IPR027354">
    <property type="entry name" value="YcgL_dom"/>
</dbReference>
<dbReference type="PANTHER" id="PTHR38109">
    <property type="entry name" value="PROTEIN YCGL"/>
    <property type="match status" value="1"/>
</dbReference>
<dbReference type="PANTHER" id="PTHR38109:SF1">
    <property type="entry name" value="PROTEIN YCGL"/>
    <property type="match status" value="1"/>
</dbReference>
<dbReference type="Pfam" id="PF05166">
    <property type="entry name" value="YcgL"/>
    <property type="match status" value="1"/>
</dbReference>
<dbReference type="SUPFAM" id="SSF160191">
    <property type="entry name" value="YcgL-like"/>
    <property type="match status" value="1"/>
</dbReference>
<dbReference type="PROSITE" id="PS51648">
    <property type="entry name" value="YCGL"/>
    <property type="match status" value="1"/>
</dbReference>
<accession>Q87RC2</accession>
<proteinExistence type="inferred from homology"/>
<organism>
    <name type="scientific">Vibrio parahaemolyticus serotype O3:K6 (strain RIMD 2210633)</name>
    <dbReference type="NCBI Taxonomy" id="223926"/>
    <lineage>
        <taxon>Bacteria</taxon>
        <taxon>Pseudomonadati</taxon>
        <taxon>Pseudomonadota</taxon>
        <taxon>Gammaproteobacteria</taxon>
        <taxon>Vibrionales</taxon>
        <taxon>Vibrionaceae</taxon>
        <taxon>Vibrio</taxon>
    </lineage>
</organism>
<sequence length="94" mass="10836">MLCSIYKSSKKEGTYLYIPKKDDFSQVPDTLMQMFGKPIPVMTIKLDGRKLAQVDIEKVKASLQNDGFFLQVPPPPENLLEKYKEQKAQQKNEQ</sequence>
<evidence type="ECO:0000255" key="1">
    <source>
        <dbReference type="HAMAP-Rule" id="MF_01866"/>
    </source>
</evidence>
<gene>
    <name type="ordered locus">VP0875</name>
</gene>